<comment type="function">
    <text evidence="2">May play an important role in maintaining pathogenicity in plants.</text>
</comment>
<comment type="subunit">
    <text evidence="2">Homotrimer.</text>
</comment>
<comment type="subcellular location">
    <subcellularLocation>
        <location evidence="2">Cell outer membrane</location>
        <topology evidence="2">Multi-pass membrane protein</topology>
    </subcellularLocation>
</comment>
<comment type="similarity">
    <text evidence="3">Belongs to the Gram-negative porin family.</text>
</comment>
<dbReference type="EMBL" id="DQ184680">
    <property type="protein sequence ID" value="ABA62396.1"/>
    <property type="molecule type" value="Genomic_DNA"/>
</dbReference>
<dbReference type="SMR" id="A0RZH5"/>
<dbReference type="TCDB" id="1.B.1.1.8">
    <property type="family name" value="the general bacterial porin (gbp) family"/>
</dbReference>
<dbReference type="GO" id="GO:0009279">
    <property type="term" value="C:cell outer membrane"/>
    <property type="evidence" value="ECO:0007669"/>
    <property type="project" value="UniProtKB-SubCell"/>
</dbReference>
<dbReference type="GO" id="GO:0046930">
    <property type="term" value="C:pore complex"/>
    <property type="evidence" value="ECO:0007669"/>
    <property type="project" value="UniProtKB-KW"/>
</dbReference>
<dbReference type="GO" id="GO:0015288">
    <property type="term" value="F:porin activity"/>
    <property type="evidence" value="ECO:0007669"/>
    <property type="project" value="UniProtKB-KW"/>
</dbReference>
<dbReference type="GO" id="GO:0034220">
    <property type="term" value="P:monoatomic ion transmembrane transport"/>
    <property type="evidence" value="ECO:0007669"/>
    <property type="project" value="InterPro"/>
</dbReference>
<dbReference type="CDD" id="cd00342">
    <property type="entry name" value="gram_neg_porins"/>
    <property type="match status" value="1"/>
</dbReference>
<dbReference type="Gene3D" id="2.40.160.10">
    <property type="entry name" value="Porin"/>
    <property type="match status" value="1"/>
</dbReference>
<dbReference type="InterPro" id="IPR050298">
    <property type="entry name" value="Gram-neg_bact_OMP"/>
</dbReference>
<dbReference type="InterPro" id="IPR033900">
    <property type="entry name" value="Gram_neg_porin_domain"/>
</dbReference>
<dbReference type="InterPro" id="IPR023614">
    <property type="entry name" value="Porin_dom_sf"/>
</dbReference>
<dbReference type="InterPro" id="IPR001897">
    <property type="entry name" value="Porin_gammaproteobac"/>
</dbReference>
<dbReference type="InterPro" id="IPR001702">
    <property type="entry name" value="Porin_Gram-ve"/>
</dbReference>
<dbReference type="PANTHER" id="PTHR34501:SF8">
    <property type="entry name" value="OUTER MEMBRANE PORIN N-RELATED"/>
    <property type="match status" value="1"/>
</dbReference>
<dbReference type="PANTHER" id="PTHR34501">
    <property type="entry name" value="PROTEIN YDDL-RELATED"/>
    <property type="match status" value="1"/>
</dbReference>
<dbReference type="Pfam" id="PF00267">
    <property type="entry name" value="Porin_1"/>
    <property type="match status" value="1"/>
</dbReference>
<dbReference type="PRINTS" id="PR00183">
    <property type="entry name" value="ECOLIPORIN"/>
</dbReference>
<dbReference type="PRINTS" id="PR00182">
    <property type="entry name" value="ECOLNEIPORIN"/>
</dbReference>
<dbReference type="SUPFAM" id="SSF56935">
    <property type="entry name" value="Porins"/>
    <property type="match status" value="1"/>
</dbReference>
<gene>
    <name type="primary">omp-EA</name>
    <name type="synonym">omp39</name>
</gene>
<proteinExistence type="evidence at protein level"/>
<organism>
    <name type="scientific">Erwinia amylovora</name>
    <name type="common">Fire blight bacteria</name>
    <dbReference type="NCBI Taxonomy" id="552"/>
    <lineage>
        <taxon>Bacteria</taxon>
        <taxon>Pseudomonadati</taxon>
        <taxon>Pseudomonadota</taxon>
        <taxon>Gammaproteobacteria</taxon>
        <taxon>Enterobacterales</taxon>
        <taxon>Erwiniaceae</taxon>
        <taxon>Erwinia</taxon>
    </lineage>
</organism>
<name>OMPEA_ERWAM</name>
<sequence>MKRNILAVLIPALLAAGAANAAEIYNKDGNKLDLYGKVKAMRYLSDADSNASNNADKSYTRIGFKGQTLINDQLTGYGQWEYNFSLSNSESSSDAQSGNKTRLGFAGLKLKDYGSVDYGRNYGVIYDVEAFTDMMPEFGATGYTRTDTYMLTRGNSMLTWRNSDFFGLVDGLKIALQYQGKNEGSGTRATNVSNGDGYGASLSYKIVEGLTINGAMSSSNRLNANSASSTTSQKMAAYGSGGRAEAWATGLKYDANGVYLAGTYAETRNTNPFSGASYTFAGNSTATAVSGYANKVQNTELVAQYQFDSGLRPSLAYVQTKAKDIENGIGDADLSKFVDVAATYYFNKNMSAFVDYKVNLLSDSNKLHLNTDDIVAVGLVYQF</sequence>
<evidence type="ECO:0000255" key="1"/>
<evidence type="ECO:0000269" key="2">
    <source>
    </source>
</evidence>
<evidence type="ECO:0000305" key="3"/>
<feature type="signal peptide" evidence="2">
    <location>
        <begin position="1"/>
        <end position="21"/>
    </location>
</feature>
<feature type="chain" id="PRO_0000417603" description="Outer membrane protein Omp-EA">
    <location>
        <begin position="22"/>
        <end position="383"/>
    </location>
</feature>
<feature type="topological domain" description="Periplasmic" evidence="1">
    <location>
        <begin position="22"/>
        <end position="30"/>
    </location>
</feature>
<feature type="transmembrane region" description="Beta stranded" evidence="1">
    <location>
        <begin position="31"/>
        <end position="45"/>
    </location>
</feature>
<feature type="topological domain" description="Extracellular" evidence="1">
    <location>
        <begin position="46"/>
        <end position="58"/>
    </location>
</feature>
<feature type="transmembrane region" description="Beta stranded" evidence="1">
    <location>
        <begin position="59"/>
        <end position="70"/>
    </location>
</feature>
<feature type="topological domain" description="Periplasmic" evidence="1">
    <location>
        <begin position="71"/>
        <end position="74"/>
    </location>
</feature>
<feature type="transmembrane region" description="Beta stranded" evidence="1">
    <location>
        <begin position="75"/>
        <end position="86"/>
    </location>
</feature>
<feature type="topological domain" description="Extracellular" evidence="1">
    <location>
        <begin position="87"/>
        <end position="100"/>
    </location>
</feature>
<feature type="transmembrane region" description="Beta stranded" evidence="1">
    <location>
        <begin position="101"/>
        <end position="109"/>
    </location>
</feature>
<feature type="topological domain" description="Periplasmic" evidence="1">
    <location>
        <begin position="110"/>
        <end position="112"/>
    </location>
</feature>
<feature type="transmembrane region" description="Beta stranded" evidence="1">
    <location>
        <begin position="113"/>
        <end position="122"/>
    </location>
</feature>
<feature type="topological domain" description="Extracellular" evidence="1">
    <location>
        <begin position="123"/>
        <end position="155"/>
    </location>
</feature>
<feature type="transmembrane region" description="Beta stranded" evidence="1">
    <location>
        <begin position="156"/>
        <end position="164"/>
    </location>
</feature>
<feature type="topological domain" description="Periplasmic" evidence="1">
    <location>
        <begin position="165"/>
        <end position="171"/>
    </location>
</feature>
<feature type="transmembrane region" description="Beta stranded" evidence="1">
    <location>
        <begin position="172"/>
        <end position="178"/>
    </location>
</feature>
<feature type="topological domain" description="Extracellular" evidence="1">
    <location>
        <begin position="179"/>
        <end position="198"/>
    </location>
</feature>
<feature type="transmembrane region" description="Beta stranded" evidence="1">
    <location>
        <begin position="199"/>
        <end position="206"/>
    </location>
</feature>
<feature type="topological domain" description="Periplasmic" evidence="1">
    <location>
        <begin position="207"/>
        <end position="209"/>
    </location>
</feature>
<feature type="transmembrane region" description="Beta stranded" evidence="1">
    <location>
        <begin position="210"/>
        <end position="219"/>
    </location>
</feature>
<feature type="topological domain" description="Extracellular" evidence="1">
    <location>
        <begin position="220"/>
        <end position="243"/>
    </location>
</feature>
<feature type="transmembrane region" description="Beta stranded" evidence="1">
    <location>
        <begin position="244"/>
        <end position="252"/>
    </location>
</feature>
<feature type="topological domain" description="Periplasmic" evidence="1">
    <location>
        <begin position="253"/>
        <end position="258"/>
    </location>
</feature>
<feature type="transmembrane region" description="Beta stranded" evidence="1">
    <location>
        <begin position="259"/>
        <end position="268"/>
    </location>
</feature>
<feature type="topological domain" description="Extracellular" evidence="1">
    <location>
        <begin position="269"/>
        <end position="296"/>
    </location>
</feature>
<feature type="transmembrane region" description="Beta stranded" evidence="1">
    <location>
        <begin position="297"/>
        <end position="307"/>
    </location>
</feature>
<feature type="topological domain" description="Periplasmic" evidence="1">
    <location>
        <begin position="308"/>
        <end position="310"/>
    </location>
</feature>
<feature type="transmembrane region" description="Beta stranded" evidence="1">
    <location>
        <begin position="311"/>
        <end position="319"/>
    </location>
</feature>
<feature type="topological domain" description="Extracellular" evidence="1">
    <location>
        <begin position="320"/>
        <end position="335"/>
    </location>
</feature>
<feature type="transmembrane region" description="Beta stranded" evidence="1">
    <location>
        <begin position="336"/>
        <end position="346"/>
    </location>
</feature>
<feature type="topological domain" description="Periplasmic" evidence="1">
    <location>
        <begin position="347"/>
        <end position="351"/>
    </location>
</feature>
<feature type="transmembrane region" description="Beta stranded" evidence="1">
    <location>
        <begin position="352"/>
        <end position="361"/>
    </location>
</feature>
<feature type="topological domain" description="Extracellular" evidence="1">
    <location>
        <begin position="362"/>
        <end position="372"/>
    </location>
</feature>
<feature type="transmembrane region" description="Beta stranded" evidence="1">
    <location>
        <begin position="373"/>
        <end position="383"/>
    </location>
</feature>
<keyword id="KW-0998">Cell outer membrane</keyword>
<keyword id="KW-0903">Direct protein sequencing</keyword>
<keyword id="KW-0406">Ion transport</keyword>
<keyword id="KW-0472">Membrane</keyword>
<keyword id="KW-0626">Porin</keyword>
<keyword id="KW-0732">Signal</keyword>
<keyword id="KW-0812">Transmembrane</keyword>
<keyword id="KW-1134">Transmembrane beta strand</keyword>
<keyword id="KW-0813">Transport</keyword>
<protein>
    <recommendedName>
        <fullName>Outer membrane protein Omp-EA</fullName>
    </recommendedName>
</protein>
<accession>A0RZH5</accession>
<reference key="1">
    <citation type="journal article" date="2007" name="Curr. Microbiol.">
        <title>Porin isolated from the outer membrane of Erwinia amylovora and its encoding gene.</title>
        <authorList>
            <person name="Elazar M."/>
            <person name="Halfon D."/>
            <person name="Pechatnikov I."/>
            <person name="Nitzan Y."/>
        </authorList>
    </citation>
    <scope>NUCLEOTIDE SEQUENCE [GENOMIC DNA]</scope>
    <scope>PROTEIN SEQUENCE OF 22-37</scope>
    <scope>FUNCTION</scope>
    <scope>SUBUNIT</scope>
    <scope>SUBCELLULAR LOCATION</scope>
    <scope>TOPOLOGY</scope>
</reference>